<keyword id="KW-0010">Activator</keyword>
<keyword id="KW-0238">DNA-binding</keyword>
<keyword id="KW-0479">Metal-binding</keyword>
<keyword id="KW-0539">Nucleus</keyword>
<keyword id="KW-1185">Reference proteome</keyword>
<keyword id="KW-0677">Repeat</keyword>
<keyword id="KW-0804">Transcription</keyword>
<keyword id="KW-0805">Transcription regulation</keyword>
<keyword id="KW-0862">Zinc</keyword>
<keyword id="KW-0863">Zinc-finger</keyword>
<gene>
    <name type="primary">GATA2</name>
</gene>
<dbReference type="EMBL" id="X56930">
    <property type="protein sequence ID" value="CAA40252.1"/>
    <property type="molecule type" value="mRNA"/>
</dbReference>
<dbReference type="PIR" id="A36389">
    <property type="entry name" value="A36389"/>
</dbReference>
<dbReference type="RefSeq" id="NP_001003797.1">
    <property type="nucleotide sequence ID" value="NM_001003797.2"/>
</dbReference>
<dbReference type="RefSeq" id="NP_001383523.1">
    <property type="nucleotide sequence ID" value="NM_001396594.1"/>
</dbReference>
<dbReference type="RefSeq" id="NP_001383525.1">
    <property type="nucleotide sequence ID" value="NM_001396596.1"/>
</dbReference>
<dbReference type="RefSeq" id="XP_015148565.1">
    <property type="nucleotide sequence ID" value="XM_015293079.1"/>
</dbReference>
<dbReference type="SMR" id="P23824"/>
<dbReference type="BioGRID" id="677582">
    <property type="interactions" value="1"/>
</dbReference>
<dbReference type="FunCoup" id="P23824">
    <property type="interactions" value="2"/>
</dbReference>
<dbReference type="STRING" id="9031.ENSGALP00000030109"/>
<dbReference type="GlyGen" id="P23824">
    <property type="glycosylation" value="3 sites"/>
</dbReference>
<dbReference type="PaxDb" id="9031-ENSGALP00000030109"/>
<dbReference type="GeneID" id="416018"/>
<dbReference type="KEGG" id="gga:416018"/>
<dbReference type="CTD" id="2624"/>
<dbReference type="VEuPathDB" id="HostDB:geneid_416018"/>
<dbReference type="eggNOG" id="KOG1601">
    <property type="taxonomic scope" value="Eukaryota"/>
</dbReference>
<dbReference type="HOGENOM" id="CLU_027524_1_0_1"/>
<dbReference type="InParanoid" id="P23824"/>
<dbReference type="OrthoDB" id="2162994at2759"/>
<dbReference type="PhylomeDB" id="P23824"/>
<dbReference type="Reactome" id="R-GGA-8939236">
    <property type="pathway name" value="RUNX1 regulates transcription of genes involved in differentiation of HSCs"/>
</dbReference>
<dbReference type="Reactome" id="R-GGA-983231">
    <property type="pathway name" value="Factors involved in megakaryocyte development and platelet production"/>
</dbReference>
<dbReference type="PRO" id="PR:P23824"/>
<dbReference type="Proteomes" id="UP000000539">
    <property type="component" value="Chromosome 12"/>
</dbReference>
<dbReference type="Bgee" id="ENSGALG00000005909">
    <property type="expression patterns" value="Expressed in granulocyte and 9 other cell types or tissues"/>
</dbReference>
<dbReference type="GO" id="GO:0005634">
    <property type="term" value="C:nucleus"/>
    <property type="evidence" value="ECO:0000318"/>
    <property type="project" value="GO_Central"/>
</dbReference>
<dbReference type="GO" id="GO:0000981">
    <property type="term" value="F:DNA-binding transcription factor activity, RNA polymerase II-specific"/>
    <property type="evidence" value="ECO:0000318"/>
    <property type="project" value="GO_Central"/>
</dbReference>
<dbReference type="GO" id="GO:0000978">
    <property type="term" value="F:RNA polymerase II cis-regulatory region sequence-specific DNA binding"/>
    <property type="evidence" value="ECO:0000318"/>
    <property type="project" value="GO_Central"/>
</dbReference>
<dbReference type="GO" id="GO:0001223">
    <property type="term" value="F:transcription coactivator binding"/>
    <property type="evidence" value="ECO:0000353"/>
    <property type="project" value="BHF-UCL"/>
</dbReference>
<dbReference type="GO" id="GO:0008270">
    <property type="term" value="F:zinc ion binding"/>
    <property type="evidence" value="ECO:0007669"/>
    <property type="project" value="UniProtKB-KW"/>
</dbReference>
<dbReference type="GO" id="GO:0045165">
    <property type="term" value="P:cell fate commitment"/>
    <property type="evidence" value="ECO:0000318"/>
    <property type="project" value="GO_Central"/>
</dbReference>
<dbReference type="GO" id="GO:0000122">
    <property type="term" value="P:negative regulation of transcription by RNA polymerase II"/>
    <property type="evidence" value="ECO:0000318"/>
    <property type="project" value="GO_Central"/>
</dbReference>
<dbReference type="GO" id="GO:0045766">
    <property type="term" value="P:positive regulation of angiogenesis"/>
    <property type="evidence" value="ECO:0000318"/>
    <property type="project" value="GO_Central"/>
</dbReference>
<dbReference type="GO" id="GO:1902895">
    <property type="term" value="P:positive regulation of miRNA transcription"/>
    <property type="evidence" value="ECO:0000318"/>
    <property type="project" value="GO_Central"/>
</dbReference>
<dbReference type="GO" id="GO:0045944">
    <property type="term" value="P:positive regulation of transcription by RNA polymerase II"/>
    <property type="evidence" value="ECO:0000318"/>
    <property type="project" value="GO_Central"/>
</dbReference>
<dbReference type="CDD" id="cd00202">
    <property type="entry name" value="ZnF_GATA"/>
    <property type="match status" value="2"/>
</dbReference>
<dbReference type="FunFam" id="3.30.50.10:FF:000001">
    <property type="entry name" value="GATA transcription factor (GATAd)"/>
    <property type="match status" value="1"/>
</dbReference>
<dbReference type="FunFam" id="3.30.50.10:FF:000032">
    <property type="entry name" value="Transcription factor GATA-3"/>
    <property type="match status" value="1"/>
</dbReference>
<dbReference type="Gene3D" id="3.30.50.10">
    <property type="entry name" value="Erythroid Transcription Factor GATA-1, subunit A"/>
    <property type="match status" value="2"/>
</dbReference>
<dbReference type="InterPro" id="IPR016374">
    <property type="entry name" value="TF_GATA-2/3"/>
</dbReference>
<dbReference type="InterPro" id="IPR039355">
    <property type="entry name" value="Transcription_factor_GATA"/>
</dbReference>
<dbReference type="InterPro" id="IPR000679">
    <property type="entry name" value="Znf_GATA"/>
</dbReference>
<dbReference type="InterPro" id="IPR013088">
    <property type="entry name" value="Znf_NHR/GATA"/>
</dbReference>
<dbReference type="PANTHER" id="PTHR10071:SF149">
    <property type="entry name" value="ENDOTHELIAL TRANSCRIPTION FACTOR GATA-2"/>
    <property type="match status" value="1"/>
</dbReference>
<dbReference type="PANTHER" id="PTHR10071">
    <property type="entry name" value="TRANSCRIPTION FACTOR GATA FAMILY MEMBER"/>
    <property type="match status" value="1"/>
</dbReference>
<dbReference type="Pfam" id="PF00320">
    <property type="entry name" value="GATA"/>
    <property type="match status" value="2"/>
</dbReference>
<dbReference type="PIRSF" id="PIRSF003027">
    <property type="entry name" value="TF_GATA-1/2/3"/>
    <property type="match status" value="1"/>
</dbReference>
<dbReference type="PRINTS" id="PR00619">
    <property type="entry name" value="GATAZNFINGER"/>
</dbReference>
<dbReference type="SMART" id="SM00401">
    <property type="entry name" value="ZnF_GATA"/>
    <property type="match status" value="2"/>
</dbReference>
<dbReference type="SUPFAM" id="SSF57716">
    <property type="entry name" value="Glucocorticoid receptor-like (DNA-binding domain)"/>
    <property type="match status" value="2"/>
</dbReference>
<dbReference type="PROSITE" id="PS00344">
    <property type="entry name" value="GATA_ZN_FINGER_1"/>
    <property type="match status" value="2"/>
</dbReference>
<dbReference type="PROSITE" id="PS50114">
    <property type="entry name" value="GATA_ZN_FINGER_2"/>
    <property type="match status" value="2"/>
</dbReference>
<proteinExistence type="evidence at transcript level"/>
<organism>
    <name type="scientific">Gallus gallus</name>
    <name type="common">Chicken</name>
    <dbReference type="NCBI Taxonomy" id="9031"/>
    <lineage>
        <taxon>Eukaryota</taxon>
        <taxon>Metazoa</taxon>
        <taxon>Chordata</taxon>
        <taxon>Craniata</taxon>
        <taxon>Vertebrata</taxon>
        <taxon>Euteleostomi</taxon>
        <taxon>Archelosauria</taxon>
        <taxon>Archosauria</taxon>
        <taxon>Dinosauria</taxon>
        <taxon>Saurischia</taxon>
        <taxon>Theropoda</taxon>
        <taxon>Coelurosauria</taxon>
        <taxon>Aves</taxon>
        <taxon>Neognathae</taxon>
        <taxon>Galloanserae</taxon>
        <taxon>Galliformes</taxon>
        <taxon>Phasianidae</taxon>
        <taxon>Phasianinae</taxon>
        <taxon>Gallus</taxon>
    </lineage>
</organism>
<comment type="function">
    <text>Transcriptional activator which probably serves as a general switch factor for cell-specific development. It binds to DNA sites with the consensus sequence 5'-[AT]GATA[AG]-3' within regulatory regions of genes.</text>
</comment>
<comment type="subcellular location">
    <subcellularLocation>
        <location>Nucleus</location>
    </subcellularLocation>
</comment>
<comment type="tissue specificity">
    <text>Expressed in all developmental stages of erythroid cells but is additionally found in a limited subset of other tissues.</text>
</comment>
<sequence length="466" mass="50150">MEVATDQPRWMTHHAVLNGQHPESHHPGLAHNYMEPAQLLPPDEVDVFFNHLDSQGNPYYANSAHARARVSYSQAHARLTGSQMCRPHLIHSPGIPWLDSSKAALSAHHHNPWTVNPFTKTPLHPSAAGAPGAISVYPGSSTSSTASVSSLTPASHSGSHLFGFPPTPPKEVSPDPNSTSAASPSSSAGARQEDKDSIKYQVSLSEGMKMESASPLRSSLTSMGAQPSTHHPIPTYPSYVPAAHDYSSSLFHPGSFLGGPASSFTPKPRSKARSCSEGRECVNCGATATPLWRRDGTGHYLCNACGLYHKMNGQNRPLIKPKRRLSAARRAGTCCANCQTTTTTLWRRNANGDPVCNACGLYYKLHNVNRPLTMKKEGIQTRNRKMSNKSKKSKKGSECFEELSKCMQEKSSPFSAAALASHMAPMGHLPPFSHSGHILPTPTPIHPSSSISFGHPHPSSMVTAMG</sequence>
<reference key="1">
    <citation type="journal article" date="1991" name="Mol. Cell. Biol.">
        <title>Murine and human T-lymphocyte GATA-3 factors mediate transcription through a cis-regulatory element within the human T-cell receptor delta gene enhancer.</title>
        <authorList>
            <person name="Ko L.J."/>
            <person name="Yamamoto M."/>
            <person name="Leonard M.W."/>
            <person name="George K.M."/>
            <person name="Ting P."/>
            <person name="Engel J.D."/>
        </authorList>
    </citation>
    <scope>NUCLEOTIDE SEQUENCE [MRNA]</scope>
</reference>
<reference key="2">
    <citation type="journal article" date="1990" name="Genes Dev.">
        <title>Activity and tissue-specific expression of the transcription factor NF-E1 multigene family.</title>
        <authorList>
            <person name="Yamamoto M."/>
            <person name="Ko L.J."/>
            <person name="Leonard M.W."/>
            <person name="Beug H."/>
            <person name="Orkin S.H."/>
            <person name="Engel J.D."/>
        </authorList>
    </citation>
    <scope>NUCLEOTIDE SEQUENCE [MRNA]</scope>
</reference>
<feature type="chain" id="PRO_0000083406" description="GATA-binding factor 2">
    <location>
        <begin position="1"/>
        <end position="466"/>
    </location>
</feature>
<feature type="zinc finger region" description="GATA-type 1" evidence="1">
    <location>
        <begin position="281"/>
        <end position="305"/>
    </location>
</feature>
<feature type="zinc finger region" description="GATA-type 2" evidence="1">
    <location>
        <begin position="335"/>
        <end position="359"/>
    </location>
</feature>
<feature type="region of interest" description="Disordered" evidence="2">
    <location>
        <begin position="139"/>
        <end position="196"/>
    </location>
</feature>
<feature type="region of interest" description="Disordered" evidence="2">
    <location>
        <begin position="436"/>
        <end position="466"/>
    </location>
</feature>
<feature type="compositionally biased region" description="Low complexity" evidence="2">
    <location>
        <begin position="139"/>
        <end position="155"/>
    </location>
</feature>
<feature type="compositionally biased region" description="Low complexity" evidence="2">
    <location>
        <begin position="174"/>
        <end position="188"/>
    </location>
</feature>
<name>GATA2_CHICK</name>
<protein>
    <recommendedName>
        <fullName>GATA-binding factor 2</fullName>
        <shortName>GATA-2</shortName>
    </recommendedName>
    <alternativeName>
        <fullName>Transcription factor NF-E1b</fullName>
    </alternativeName>
</protein>
<accession>P23824</accession>
<evidence type="ECO:0000255" key="1">
    <source>
        <dbReference type="PROSITE-ProRule" id="PRU00094"/>
    </source>
</evidence>
<evidence type="ECO:0000256" key="2">
    <source>
        <dbReference type="SAM" id="MobiDB-lite"/>
    </source>
</evidence>